<organism>
    <name type="scientific">Baumannia cicadellinicola subsp. Homalodisca coagulata</name>
    <dbReference type="NCBI Taxonomy" id="374463"/>
    <lineage>
        <taxon>Bacteria</taxon>
        <taxon>Pseudomonadati</taxon>
        <taxon>Pseudomonadota</taxon>
        <taxon>Gammaproteobacteria</taxon>
        <taxon>Candidatus Palibaumannia</taxon>
    </lineage>
</organism>
<accession>Q1LSK1</accession>
<dbReference type="EMBL" id="CP000238">
    <property type="protein sequence ID" value="ABF14069.1"/>
    <property type="molecule type" value="Genomic_DNA"/>
</dbReference>
<dbReference type="RefSeq" id="WP_011520796.1">
    <property type="nucleotide sequence ID" value="NC_007984.1"/>
</dbReference>
<dbReference type="SMR" id="Q1LSK1"/>
<dbReference type="STRING" id="374463.BCI_0640"/>
<dbReference type="KEGG" id="bci:BCI_0640"/>
<dbReference type="HOGENOM" id="CLU_101379_2_0_6"/>
<dbReference type="OrthoDB" id="9808774at2"/>
<dbReference type="Proteomes" id="UP000002427">
    <property type="component" value="Chromosome"/>
</dbReference>
<dbReference type="GO" id="GO:0003677">
    <property type="term" value="F:DNA binding"/>
    <property type="evidence" value="ECO:0007669"/>
    <property type="project" value="UniProtKB-UniRule"/>
</dbReference>
<dbReference type="GO" id="GO:0070063">
    <property type="term" value="F:RNA polymerase binding"/>
    <property type="evidence" value="ECO:0007669"/>
    <property type="project" value="InterPro"/>
</dbReference>
<dbReference type="GO" id="GO:0006354">
    <property type="term" value="P:DNA-templated transcription elongation"/>
    <property type="evidence" value="ECO:0007669"/>
    <property type="project" value="TreeGrafter"/>
</dbReference>
<dbReference type="GO" id="GO:0032784">
    <property type="term" value="P:regulation of DNA-templated transcription elongation"/>
    <property type="evidence" value="ECO:0007669"/>
    <property type="project" value="UniProtKB-UniRule"/>
</dbReference>
<dbReference type="FunFam" id="1.10.287.180:FF:000001">
    <property type="entry name" value="Transcription elongation factor GreA"/>
    <property type="match status" value="1"/>
</dbReference>
<dbReference type="FunFam" id="3.10.50.30:FF:000001">
    <property type="entry name" value="Transcription elongation factor GreA"/>
    <property type="match status" value="1"/>
</dbReference>
<dbReference type="Gene3D" id="3.10.50.30">
    <property type="entry name" value="Transcription elongation factor, GreA/GreB, C-terminal domain"/>
    <property type="match status" value="1"/>
</dbReference>
<dbReference type="Gene3D" id="1.10.287.180">
    <property type="entry name" value="Transcription elongation factor, GreA/GreB, N-terminal domain"/>
    <property type="match status" value="1"/>
</dbReference>
<dbReference type="HAMAP" id="MF_00105">
    <property type="entry name" value="GreA_GreB"/>
    <property type="match status" value="1"/>
</dbReference>
<dbReference type="InterPro" id="IPR036953">
    <property type="entry name" value="GreA/GreB_C_sf"/>
</dbReference>
<dbReference type="InterPro" id="IPR018151">
    <property type="entry name" value="TF_GreA/GreB_CS"/>
</dbReference>
<dbReference type="InterPro" id="IPR006359">
    <property type="entry name" value="Tscrpt_elong_fac_GreA"/>
</dbReference>
<dbReference type="InterPro" id="IPR028624">
    <property type="entry name" value="Tscrpt_elong_fac_GreA/B"/>
</dbReference>
<dbReference type="InterPro" id="IPR001437">
    <property type="entry name" value="Tscrpt_elong_fac_GreA/B_C"/>
</dbReference>
<dbReference type="InterPro" id="IPR023459">
    <property type="entry name" value="Tscrpt_elong_fac_GreA/B_fam"/>
</dbReference>
<dbReference type="InterPro" id="IPR022691">
    <property type="entry name" value="Tscrpt_elong_fac_GreA/B_N"/>
</dbReference>
<dbReference type="InterPro" id="IPR036805">
    <property type="entry name" value="Tscrpt_elong_fac_GreA/B_N_sf"/>
</dbReference>
<dbReference type="NCBIfam" id="TIGR01462">
    <property type="entry name" value="greA"/>
    <property type="match status" value="1"/>
</dbReference>
<dbReference type="NCBIfam" id="NF001261">
    <property type="entry name" value="PRK00226.1-2"/>
    <property type="match status" value="1"/>
</dbReference>
<dbReference type="NCBIfam" id="NF001263">
    <property type="entry name" value="PRK00226.1-4"/>
    <property type="match status" value="1"/>
</dbReference>
<dbReference type="NCBIfam" id="NF001264">
    <property type="entry name" value="PRK00226.1-5"/>
    <property type="match status" value="1"/>
</dbReference>
<dbReference type="PANTHER" id="PTHR30437">
    <property type="entry name" value="TRANSCRIPTION ELONGATION FACTOR GREA"/>
    <property type="match status" value="1"/>
</dbReference>
<dbReference type="PANTHER" id="PTHR30437:SF4">
    <property type="entry name" value="TRANSCRIPTION ELONGATION FACTOR GREA"/>
    <property type="match status" value="1"/>
</dbReference>
<dbReference type="Pfam" id="PF01272">
    <property type="entry name" value="GreA_GreB"/>
    <property type="match status" value="1"/>
</dbReference>
<dbReference type="Pfam" id="PF03449">
    <property type="entry name" value="GreA_GreB_N"/>
    <property type="match status" value="1"/>
</dbReference>
<dbReference type="PIRSF" id="PIRSF006092">
    <property type="entry name" value="GreA_GreB"/>
    <property type="match status" value="1"/>
</dbReference>
<dbReference type="SUPFAM" id="SSF54534">
    <property type="entry name" value="FKBP-like"/>
    <property type="match status" value="1"/>
</dbReference>
<dbReference type="SUPFAM" id="SSF46557">
    <property type="entry name" value="GreA transcript cleavage protein, N-terminal domain"/>
    <property type="match status" value="1"/>
</dbReference>
<dbReference type="PROSITE" id="PS00829">
    <property type="entry name" value="GREAB_1"/>
    <property type="match status" value="1"/>
</dbReference>
<dbReference type="PROSITE" id="PS00830">
    <property type="entry name" value="GREAB_2"/>
    <property type="match status" value="1"/>
</dbReference>
<comment type="function">
    <text evidence="1">Necessary for efficient RNA polymerase transcription elongation past template-encoded arresting sites. The arresting sites in DNA have the property of trapping a certain fraction of elongating RNA polymerases that pass through, resulting in locked ternary complexes. Cleavage of the nascent transcript by cleavage factors such as GreA or GreB allows the resumption of elongation from the new 3'terminus. GreA releases sequences of 2 to 3 nucleotides.</text>
</comment>
<comment type="similarity">
    <text evidence="1">Belongs to the GreA/GreB family.</text>
</comment>
<keyword id="KW-0238">DNA-binding</keyword>
<keyword id="KW-1185">Reference proteome</keyword>
<keyword id="KW-0804">Transcription</keyword>
<keyword id="KW-0805">Transcription regulation</keyword>
<feature type="chain" id="PRO_1000075863" description="Transcription elongation factor GreA">
    <location>
        <begin position="1"/>
        <end position="158"/>
    </location>
</feature>
<evidence type="ECO:0000255" key="1">
    <source>
        <dbReference type="HAMAP-Rule" id="MF_00105"/>
    </source>
</evidence>
<name>GREA_BAUCH</name>
<sequence length="158" mass="18051">MNQIPMTLRGAEQLREELNYLKNVRRPEIIRNIAEAREYGDLKENAEYHAAREQQGFCEGRIQEIESKLSHAQIIDVTKLFPSGKVVFGVTVSVQNLNINEEQTYRIVGDDEANFKHNLISISSPIARGLIGKKKGDIVLIKTPRGEVKYQILKIEYL</sequence>
<reference key="1">
    <citation type="journal article" date="2006" name="PLoS Biol.">
        <title>Metabolic complementarity and genomics of the dual bacterial symbiosis of sharpshooters.</title>
        <authorList>
            <person name="Wu D."/>
            <person name="Daugherty S.C."/>
            <person name="Van Aken S.E."/>
            <person name="Pai G.H."/>
            <person name="Watkins K.L."/>
            <person name="Khouri H."/>
            <person name="Tallon L.J."/>
            <person name="Zaborsky J.M."/>
            <person name="Dunbar H.E."/>
            <person name="Tran P.L."/>
            <person name="Moran N.A."/>
            <person name="Eisen J.A."/>
        </authorList>
    </citation>
    <scope>NUCLEOTIDE SEQUENCE [LARGE SCALE GENOMIC DNA]</scope>
</reference>
<gene>
    <name evidence="1" type="primary">greA</name>
    <name type="ordered locus">BCI_0640</name>
</gene>
<proteinExistence type="inferred from homology"/>
<protein>
    <recommendedName>
        <fullName evidence="1">Transcription elongation factor GreA</fullName>
    </recommendedName>
    <alternativeName>
        <fullName evidence="1">Transcript cleavage factor GreA</fullName>
    </alternativeName>
</protein>